<sequence>MSVEKQTAMRRTFAIISHPDAGKTTLTEKLLLFGGAIQLAGTIKSRKAARHATSDWMELEKQRGISVTTSVMQFPYKDYLINLLDTPGHADFTEDTYRTLTAVDSALMVIDAAKGVEPRTIKLMEVCRLRHTPIMTFINKMDRDTRPSIELLDEIESILRIHCAPVTWPIGMGKYFKGIYHLIEDAIYLYQPGKHERVGESERIEGINNPELDKKLGDLASELRNEIELVKGASHPFEREGYLKGELTPIFFGSAINNFGVGELLDAFVKEAPPPQGRETNSRLVKPEEEKFSGFVFKIQANMDPGHRDRIAFLRIASGQYQKGMKAYHVRLKKEIQINNALTFMAGKRENAEEAWPGDIIGLHNHGTIQIGDTFTQGERFKFTGIPNFASELFRLVRLKDPLKQKALLKGLTQLSEEGATQLFRPLDSNELILGAVGLLQFDVVAYRLENEYNVKCVYESVNVVTARWVICDDKAVLERFNQEQSRNLAYDGGGHLTYLAPSRVNLEITMEKWPEIQFSETREH</sequence>
<keyword id="KW-0002">3D-structure</keyword>
<keyword id="KW-0963">Cytoplasm</keyword>
<keyword id="KW-0342">GTP-binding</keyword>
<keyword id="KW-0547">Nucleotide-binding</keyword>
<keyword id="KW-0648">Protein biosynthesis</keyword>
<keyword id="KW-1185">Reference proteome</keyword>
<proteinExistence type="evidence at protein level"/>
<reference key="1">
    <citation type="journal article" date="2003" name="Proc. Natl. Acad. Sci. U.S.A.">
        <title>Complete genome sequence of the Q-fever pathogen, Coxiella burnetii.</title>
        <authorList>
            <person name="Seshadri R."/>
            <person name="Paulsen I.T."/>
            <person name="Eisen J.A."/>
            <person name="Read T.D."/>
            <person name="Nelson K.E."/>
            <person name="Nelson W.C."/>
            <person name="Ward N.L."/>
            <person name="Tettelin H."/>
            <person name="Davidsen T.M."/>
            <person name="Beanan M.J."/>
            <person name="DeBoy R.T."/>
            <person name="Daugherty S.C."/>
            <person name="Brinkac L.M."/>
            <person name="Madupu R."/>
            <person name="Dodson R.J."/>
            <person name="Khouri H.M."/>
            <person name="Lee K.H."/>
            <person name="Carty H.A."/>
            <person name="Scanlan D."/>
            <person name="Heinzen R.A."/>
            <person name="Thompson H.A."/>
            <person name="Samuel J.E."/>
            <person name="Fraser C.M."/>
            <person name="Heidelberg J.F."/>
        </authorList>
    </citation>
    <scope>NUCLEOTIDE SEQUENCE [LARGE SCALE GENOMIC DNA]</scope>
    <source>
        <strain>RSA 493 / Nine Mile phase I</strain>
    </source>
</reference>
<protein>
    <recommendedName>
        <fullName evidence="1">Peptide chain release factor 3</fullName>
        <shortName evidence="1">RF-3</shortName>
    </recommendedName>
</protein>
<name>RF3_COXBU</name>
<feature type="chain" id="PRO_0000210937" description="Peptide chain release factor 3">
    <location>
        <begin position="1"/>
        <end position="525"/>
    </location>
</feature>
<feature type="domain" description="tr-type G">
    <location>
        <begin position="8"/>
        <end position="276"/>
    </location>
</feature>
<feature type="binding site" evidence="1">
    <location>
        <begin position="17"/>
        <end position="24"/>
    </location>
    <ligand>
        <name>GTP</name>
        <dbReference type="ChEBI" id="CHEBI:37565"/>
    </ligand>
</feature>
<feature type="binding site" evidence="1">
    <location>
        <begin position="85"/>
        <end position="89"/>
    </location>
    <ligand>
        <name>GTP</name>
        <dbReference type="ChEBI" id="CHEBI:37565"/>
    </ligand>
</feature>
<feature type="binding site" evidence="1">
    <location>
        <begin position="139"/>
        <end position="142"/>
    </location>
    <ligand>
        <name>GTP</name>
        <dbReference type="ChEBI" id="CHEBI:37565"/>
    </ligand>
</feature>
<feature type="helix" evidence="2">
    <location>
        <begin position="4"/>
        <end position="8"/>
    </location>
</feature>
<feature type="strand" evidence="2">
    <location>
        <begin position="10"/>
        <end position="17"/>
    </location>
</feature>
<feature type="helix" evidence="2">
    <location>
        <begin position="23"/>
        <end position="33"/>
    </location>
</feature>
<feature type="helix" evidence="2">
    <location>
        <begin position="37"/>
        <end position="44"/>
    </location>
</feature>
<feature type="helix" evidence="2">
    <location>
        <begin position="53"/>
        <end position="63"/>
    </location>
</feature>
<feature type="strand" evidence="2">
    <location>
        <begin position="66"/>
        <end position="76"/>
    </location>
</feature>
<feature type="strand" evidence="2">
    <location>
        <begin position="79"/>
        <end position="84"/>
    </location>
</feature>
<feature type="helix" evidence="2">
    <location>
        <begin position="94"/>
        <end position="98"/>
    </location>
</feature>
<feature type="helix" evidence="2">
    <location>
        <begin position="99"/>
        <end position="102"/>
    </location>
</feature>
<feature type="strand" evidence="2">
    <location>
        <begin position="104"/>
        <end position="111"/>
    </location>
</feature>
<feature type="turn" evidence="2">
    <location>
        <begin position="112"/>
        <end position="114"/>
    </location>
</feature>
<feature type="helix" evidence="2">
    <location>
        <begin position="118"/>
        <end position="128"/>
    </location>
</feature>
<feature type="turn" evidence="2">
    <location>
        <begin position="129"/>
        <end position="131"/>
    </location>
</feature>
<feature type="strand" evidence="2">
    <location>
        <begin position="134"/>
        <end position="139"/>
    </location>
</feature>
<feature type="helix" evidence="2">
    <location>
        <begin position="148"/>
        <end position="159"/>
    </location>
</feature>
<feature type="strand" evidence="2">
    <location>
        <begin position="162"/>
        <end position="171"/>
    </location>
</feature>
<feature type="helix" evidence="2">
    <location>
        <begin position="173"/>
        <end position="175"/>
    </location>
</feature>
<feature type="strand" evidence="2">
    <location>
        <begin position="178"/>
        <end position="181"/>
    </location>
</feature>
<feature type="turn" evidence="2">
    <location>
        <begin position="182"/>
        <end position="185"/>
    </location>
</feature>
<feature type="strand" evidence="2">
    <location>
        <begin position="186"/>
        <end position="189"/>
    </location>
</feature>
<feature type="strand" evidence="2">
    <location>
        <begin position="194"/>
        <end position="197"/>
    </location>
</feature>
<feature type="strand" evidence="2">
    <location>
        <begin position="203"/>
        <end position="205"/>
    </location>
</feature>
<feature type="helix" evidence="2">
    <location>
        <begin position="210"/>
        <end position="216"/>
    </location>
</feature>
<feature type="helix" evidence="2">
    <location>
        <begin position="218"/>
        <end position="233"/>
    </location>
</feature>
<feature type="helix" evidence="2">
    <location>
        <begin position="239"/>
        <end position="243"/>
    </location>
</feature>
<feature type="strand" evidence="2">
    <location>
        <begin position="246"/>
        <end position="252"/>
    </location>
</feature>
<feature type="helix" evidence="2">
    <location>
        <begin position="255"/>
        <end position="257"/>
    </location>
</feature>
<feature type="helix" evidence="2">
    <location>
        <begin position="261"/>
        <end position="271"/>
    </location>
</feature>
<feature type="strand" evidence="2">
    <location>
        <begin position="280"/>
        <end position="283"/>
    </location>
</feature>
<feature type="strand" evidence="2">
    <location>
        <begin position="289"/>
        <end position="291"/>
    </location>
</feature>
<feature type="strand" evidence="2">
    <location>
        <begin position="293"/>
        <end position="301"/>
    </location>
</feature>
<feature type="strand" evidence="2">
    <location>
        <begin position="310"/>
        <end position="319"/>
    </location>
</feature>
<feature type="strand" evidence="2">
    <location>
        <begin position="325"/>
        <end position="329"/>
    </location>
</feature>
<feature type="turn" evidence="2">
    <location>
        <begin position="330"/>
        <end position="333"/>
    </location>
</feature>
<feature type="strand" evidence="2">
    <location>
        <begin position="334"/>
        <end position="340"/>
    </location>
</feature>
<feature type="strand" evidence="2">
    <location>
        <begin position="353"/>
        <end position="355"/>
    </location>
</feature>
<feature type="strand" evidence="2">
    <location>
        <begin position="360"/>
        <end position="368"/>
    </location>
</feature>
<feature type="strand" evidence="2">
    <location>
        <begin position="374"/>
        <end position="378"/>
    </location>
</feature>
<feature type="strand" evidence="2">
    <location>
        <begin position="387"/>
        <end position="389"/>
    </location>
</feature>
<feature type="strand" evidence="2">
    <location>
        <begin position="392"/>
        <end position="400"/>
    </location>
</feature>
<feature type="helix" evidence="2">
    <location>
        <begin position="402"/>
        <end position="404"/>
    </location>
</feature>
<feature type="helix" evidence="2">
    <location>
        <begin position="405"/>
        <end position="417"/>
    </location>
</feature>
<feature type="strand" evidence="2">
    <location>
        <begin position="422"/>
        <end position="426"/>
    </location>
</feature>
<feature type="strand" evidence="2">
    <location>
        <begin position="432"/>
        <end position="438"/>
    </location>
</feature>
<feature type="helix" evidence="2">
    <location>
        <begin position="440"/>
        <end position="453"/>
    </location>
</feature>
<feature type="strand" evidence="2">
    <location>
        <begin position="457"/>
        <end position="460"/>
    </location>
</feature>
<feature type="strand" evidence="2">
    <location>
        <begin position="466"/>
        <end position="471"/>
    </location>
</feature>
<feature type="helix" evidence="2">
    <location>
        <begin position="475"/>
        <end position="484"/>
    </location>
</feature>
<feature type="helix" evidence="2">
    <location>
        <begin position="486"/>
        <end position="488"/>
    </location>
</feature>
<feature type="strand" evidence="2">
    <location>
        <begin position="489"/>
        <end position="492"/>
    </location>
</feature>
<feature type="strand" evidence="2">
    <location>
        <begin position="497"/>
        <end position="503"/>
    </location>
</feature>
<feature type="helix" evidence="2">
    <location>
        <begin position="504"/>
        <end position="513"/>
    </location>
</feature>
<feature type="strand" evidence="2">
    <location>
        <begin position="517"/>
        <end position="524"/>
    </location>
</feature>
<gene>
    <name evidence="1" type="primary">prfC</name>
    <name type="ordered locus">CBU_0811</name>
</gene>
<dbReference type="EMBL" id="AE016828">
    <property type="protein sequence ID" value="AAO90345.1"/>
    <property type="molecule type" value="Genomic_DNA"/>
</dbReference>
<dbReference type="RefSeq" id="NP_819831.1">
    <property type="nucleotide sequence ID" value="NC_002971.4"/>
</dbReference>
<dbReference type="RefSeq" id="WP_005772589.1">
    <property type="nucleotide sequence ID" value="NC_002971.4"/>
</dbReference>
<dbReference type="PDB" id="3TR5">
    <property type="method" value="X-ray"/>
    <property type="resolution" value="2.11 A"/>
    <property type="chains" value="A/B/C/D=1-525"/>
</dbReference>
<dbReference type="PDBsum" id="3TR5"/>
<dbReference type="SMR" id="Q83DC7"/>
<dbReference type="STRING" id="227377.CBU_0811"/>
<dbReference type="DNASU" id="1208704"/>
<dbReference type="EnsemblBacteria" id="AAO90345">
    <property type="protein sequence ID" value="AAO90345"/>
    <property type="gene ID" value="CBU_0811"/>
</dbReference>
<dbReference type="GeneID" id="1208704"/>
<dbReference type="KEGG" id="cbu:CBU_0811"/>
<dbReference type="PATRIC" id="fig|227377.7.peg.796"/>
<dbReference type="eggNOG" id="COG4108">
    <property type="taxonomic scope" value="Bacteria"/>
</dbReference>
<dbReference type="HOGENOM" id="CLU_002794_2_1_6"/>
<dbReference type="OrthoDB" id="9804431at2"/>
<dbReference type="EvolutionaryTrace" id="Q83DC7"/>
<dbReference type="Proteomes" id="UP000002671">
    <property type="component" value="Chromosome"/>
</dbReference>
<dbReference type="GO" id="GO:0005829">
    <property type="term" value="C:cytosol"/>
    <property type="evidence" value="ECO:0000318"/>
    <property type="project" value="GO_Central"/>
</dbReference>
<dbReference type="GO" id="GO:0005525">
    <property type="term" value="F:GTP binding"/>
    <property type="evidence" value="ECO:0007669"/>
    <property type="project" value="UniProtKB-UniRule"/>
</dbReference>
<dbReference type="GO" id="GO:0003924">
    <property type="term" value="F:GTPase activity"/>
    <property type="evidence" value="ECO:0007669"/>
    <property type="project" value="InterPro"/>
</dbReference>
<dbReference type="GO" id="GO:0097216">
    <property type="term" value="F:guanosine tetraphosphate binding"/>
    <property type="evidence" value="ECO:0007669"/>
    <property type="project" value="UniProtKB-ARBA"/>
</dbReference>
<dbReference type="GO" id="GO:0016150">
    <property type="term" value="F:translation release factor activity, codon nonspecific"/>
    <property type="evidence" value="ECO:0000318"/>
    <property type="project" value="GO_Central"/>
</dbReference>
<dbReference type="GO" id="GO:0016149">
    <property type="term" value="F:translation release factor activity, codon specific"/>
    <property type="evidence" value="ECO:0007669"/>
    <property type="project" value="UniProtKB-UniRule"/>
</dbReference>
<dbReference type="GO" id="GO:0006449">
    <property type="term" value="P:regulation of translational termination"/>
    <property type="evidence" value="ECO:0007669"/>
    <property type="project" value="UniProtKB-UniRule"/>
</dbReference>
<dbReference type="GO" id="GO:0006415">
    <property type="term" value="P:translational termination"/>
    <property type="evidence" value="ECO:0000318"/>
    <property type="project" value="GO_Central"/>
</dbReference>
<dbReference type="CDD" id="cd04169">
    <property type="entry name" value="RF3"/>
    <property type="match status" value="1"/>
</dbReference>
<dbReference type="CDD" id="cd03689">
    <property type="entry name" value="RF3_II"/>
    <property type="match status" value="1"/>
</dbReference>
<dbReference type="CDD" id="cd16259">
    <property type="entry name" value="RF3_III"/>
    <property type="match status" value="1"/>
</dbReference>
<dbReference type="FunFam" id="2.40.30.10:FF:000040">
    <property type="entry name" value="Peptide chain release factor 3"/>
    <property type="match status" value="1"/>
</dbReference>
<dbReference type="FunFam" id="3.30.70.3280:FF:000001">
    <property type="entry name" value="Peptide chain release factor 3"/>
    <property type="match status" value="1"/>
</dbReference>
<dbReference type="FunFam" id="3.40.50.300:FF:000542">
    <property type="entry name" value="Peptide chain release factor 3"/>
    <property type="match status" value="1"/>
</dbReference>
<dbReference type="Gene3D" id="3.40.50.300">
    <property type="entry name" value="P-loop containing nucleotide triphosphate hydrolases"/>
    <property type="match status" value="2"/>
</dbReference>
<dbReference type="Gene3D" id="3.30.70.3280">
    <property type="entry name" value="Peptide chain release factor 3, domain III"/>
    <property type="match status" value="1"/>
</dbReference>
<dbReference type="HAMAP" id="MF_00072">
    <property type="entry name" value="Rel_fac_3"/>
    <property type="match status" value="1"/>
</dbReference>
<dbReference type="InterPro" id="IPR053905">
    <property type="entry name" value="EF-G-like_DII"/>
</dbReference>
<dbReference type="InterPro" id="IPR035647">
    <property type="entry name" value="EFG_III/V"/>
</dbReference>
<dbReference type="InterPro" id="IPR031157">
    <property type="entry name" value="G_TR_CS"/>
</dbReference>
<dbReference type="InterPro" id="IPR027417">
    <property type="entry name" value="P-loop_NTPase"/>
</dbReference>
<dbReference type="InterPro" id="IPR004548">
    <property type="entry name" value="PrfC"/>
</dbReference>
<dbReference type="InterPro" id="IPR032090">
    <property type="entry name" value="RF3_C"/>
</dbReference>
<dbReference type="InterPro" id="IPR038467">
    <property type="entry name" value="RF3_dom_3_sf"/>
</dbReference>
<dbReference type="InterPro" id="IPR041732">
    <property type="entry name" value="RF3_GTP-bd"/>
</dbReference>
<dbReference type="InterPro" id="IPR005225">
    <property type="entry name" value="Small_GTP-bd"/>
</dbReference>
<dbReference type="InterPro" id="IPR000795">
    <property type="entry name" value="T_Tr_GTP-bd_dom"/>
</dbReference>
<dbReference type="InterPro" id="IPR009000">
    <property type="entry name" value="Transl_B-barrel_sf"/>
</dbReference>
<dbReference type="NCBIfam" id="TIGR00503">
    <property type="entry name" value="prfC"/>
    <property type="match status" value="1"/>
</dbReference>
<dbReference type="NCBIfam" id="NF001964">
    <property type="entry name" value="PRK00741.1"/>
    <property type="match status" value="1"/>
</dbReference>
<dbReference type="NCBIfam" id="TIGR00231">
    <property type="entry name" value="small_GTP"/>
    <property type="match status" value="1"/>
</dbReference>
<dbReference type="PANTHER" id="PTHR43556">
    <property type="entry name" value="PEPTIDE CHAIN RELEASE FACTOR RF3"/>
    <property type="match status" value="1"/>
</dbReference>
<dbReference type="PANTHER" id="PTHR43556:SF2">
    <property type="entry name" value="PEPTIDE CHAIN RELEASE FACTOR RF3"/>
    <property type="match status" value="1"/>
</dbReference>
<dbReference type="Pfam" id="PF22042">
    <property type="entry name" value="EF-G_D2"/>
    <property type="match status" value="1"/>
</dbReference>
<dbReference type="Pfam" id="PF00009">
    <property type="entry name" value="GTP_EFTU"/>
    <property type="match status" value="1"/>
</dbReference>
<dbReference type="Pfam" id="PF16658">
    <property type="entry name" value="RF3_C"/>
    <property type="match status" value="1"/>
</dbReference>
<dbReference type="PRINTS" id="PR00315">
    <property type="entry name" value="ELONGATNFCT"/>
</dbReference>
<dbReference type="SUPFAM" id="SSF54980">
    <property type="entry name" value="EF-G C-terminal domain-like"/>
    <property type="match status" value="1"/>
</dbReference>
<dbReference type="SUPFAM" id="SSF52540">
    <property type="entry name" value="P-loop containing nucleoside triphosphate hydrolases"/>
    <property type="match status" value="1"/>
</dbReference>
<dbReference type="SUPFAM" id="SSF50447">
    <property type="entry name" value="Translation proteins"/>
    <property type="match status" value="1"/>
</dbReference>
<dbReference type="PROSITE" id="PS00301">
    <property type="entry name" value="G_TR_1"/>
    <property type="match status" value="1"/>
</dbReference>
<dbReference type="PROSITE" id="PS51722">
    <property type="entry name" value="G_TR_2"/>
    <property type="match status" value="1"/>
</dbReference>
<comment type="function">
    <text evidence="1">Increases the formation of ribosomal termination complexes and stimulates activities of RF-1 and RF-2. It binds guanine nucleotides and has strong preference for UGA stop codons. It may interact directly with the ribosome. The stimulation of RF-1 and RF-2 is significantly reduced by GTP and GDP, but not by GMP.</text>
</comment>
<comment type="subcellular location">
    <subcellularLocation>
        <location evidence="1">Cytoplasm</location>
    </subcellularLocation>
</comment>
<comment type="similarity">
    <text evidence="1">Belongs to the TRAFAC class translation factor GTPase superfamily. Classic translation factor GTPase family. PrfC subfamily.</text>
</comment>
<organism>
    <name type="scientific">Coxiella burnetii (strain RSA 493 / Nine Mile phase I)</name>
    <dbReference type="NCBI Taxonomy" id="227377"/>
    <lineage>
        <taxon>Bacteria</taxon>
        <taxon>Pseudomonadati</taxon>
        <taxon>Pseudomonadota</taxon>
        <taxon>Gammaproteobacteria</taxon>
        <taxon>Legionellales</taxon>
        <taxon>Coxiellaceae</taxon>
        <taxon>Coxiella</taxon>
    </lineage>
</organism>
<evidence type="ECO:0000255" key="1">
    <source>
        <dbReference type="HAMAP-Rule" id="MF_00072"/>
    </source>
</evidence>
<evidence type="ECO:0007829" key="2">
    <source>
        <dbReference type="PDB" id="3TR5"/>
    </source>
</evidence>
<accession>Q83DC7</accession>